<comment type="function">
    <text evidence="1">Binds as a heterodimer with protein bS6 to the central domain of the 16S rRNA, where it helps stabilize the platform of the 30S subunit.</text>
</comment>
<comment type="subunit">
    <text evidence="1">Part of the 30S ribosomal subunit. Forms a tight heterodimer with protein bS6.</text>
</comment>
<comment type="interaction">
    <interactant intactId="EBI-7719400">
        <id>P66459</id>
    </interactant>
    <interactant intactId="EBI-7719651">
        <id>P56013</id>
        <label>rpsF</label>
    </interactant>
    <organismsDiffer>false</organismsDiffer>
    <experiments>4</experiments>
</comment>
<comment type="similarity">
    <text evidence="1">Belongs to the bacterial ribosomal protein bS18 family.</text>
</comment>
<protein>
    <recommendedName>
        <fullName evidence="1">Small ribosomal subunit protein bS18</fullName>
    </recommendedName>
    <alternativeName>
        <fullName evidence="2">30S ribosomal protein S18</fullName>
    </alternativeName>
</protein>
<dbReference type="EMBL" id="AE000511">
    <property type="protein sequence ID" value="AAD08290.1"/>
    <property type="molecule type" value="Genomic_DNA"/>
</dbReference>
<dbReference type="PIR" id="D64675">
    <property type="entry name" value="D64675"/>
</dbReference>
<dbReference type="RefSeq" id="NP_208036.1">
    <property type="nucleotide sequence ID" value="NC_000915.1"/>
</dbReference>
<dbReference type="RefSeq" id="WP_000440196.1">
    <property type="nucleotide sequence ID" value="NC_018939.1"/>
</dbReference>
<dbReference type="SMR" id="P66459"/>
<dbReference type="FunCoup" id="P66459">
    <property type="interactions" value="421"/>
</dbReference>
<dbReference type="IntAct" id="P66459">
    <property type="interactions" value="2"/>
</dbReference>
<dbReference type="MINT" id="P66459"/>
<dbReference type="STRING" id="85962.HP_1244"/>
<dbReference type="PaxDb" id="85962-C694_06430"/>
<dbReference type="EnsemblBacteria" id="AAD08290">
    <property type="protein sequence ID" value="AAD08290"/>
    <property type="gene ID" value="HP_1244"/>
</dbReference>
<dbReference type="KEGG" id="heo:C694_06430"/>
<dbReference type="KEGG" id="hpy:HP_1244"/>
<dbReference type="PATRIC" id="fig|85962.47.peg.1336"/>
<dbReference type="eggNOG" id="COG0238">
    <property type="taxonomic scope" value="Bacteria"/>
</dbReference>
<dbReference type="InParanoid" id="P66459"/>
<dbReference type="OrthoDB" id="9812008at2"/>
<dbReference type="PhylomeDB" id="P66459"/>
<dbReference type="Proteomes" id="UP000000429">
    <property type="component" value="Chromosome"/>
</dbReference>
<dbReference type="GO" id="GO:0022627">
    <property type="term" value="C:cytosolic small ribosomal subunit"/>
    <property type="evidence" value="ECO:0000318"/>
    <property type="project" value="GO_Central"/>
</dbReference>
<dbReference type="GO" id="GO:0070181">
    <property type="term" value="F:small ribosomal subunit rRNA binding"/>
    <property type="evidence" value="ECO:0000318"/>
    <property type="project" value="GO_Central"/>
</dbReference>
<dbReference type="GO" id="GO:0003735">
    <property type="term" value="F:structural constituent of ribosome"/>
    <property type="evidence" value="ECO:0000318"/>
    <property type="project" value="GO_Central"/>
</dbReference>
<dbReference type="GO" id="GO:0006412">
    <property type="term" value="P:translation"/>
    <property type="evidence" value="ECO:0000318"/>
    <property type="project" value="GO_Central"/>
</dbReference>
<dbReference type="FunFam" id="4.10.640.10:FF:000005">
    <property type="entry name" value="30S ribosomal protein S18"/>
    <property type="match status" value="1"/>
</dbReference>
<dbReference type="Gene3D" id="4.10.640.10">
    <property type="entry name" value="Ribosomal protein S18"/>
    <property type="match status" value="1"/>
</dbReference>
<dbReference type="HAMAP" id="MF_00270">
    <property type="entry name" value="Ribosomal_bS18"/>
    <property type="match status" value="1"/>
</dbReference>
<dbReference type="InterPro" id="IPR001648">
    <property type="entry name" value="Ribosomal_bS18"/>
</dbReference>
<dbReference type="InterPro" id="IPR018275">
    <property type="entry name" value="Ribosomal_bS18_CS"/>
</dbReference>
<dbReference type="InterPro" id="IPR036870">
    <property type="entry name" value="Ribosomal_bS18_sf"/>
</dbReference>
<dbReference type="NCBIfam" id="TIGR00165">
    <property type="entry name" value="S18"/>
    <property type="match status" value="1"/>
</dbReference>
<dbReference type="PANTHER" id="PTHR13479">
    <property type="entry name" value="30S RIBOSOMAL PROTEIN S18"/>
    <property type="match status" value="1"/>
</dbReference>
<dbReference type="PANTHER" id="PTHR13479:SF40">
    <property type="entry name" value="SMALL RIBOSOMAL SUBUNIT PROTEIN BS18M"/>
    <property type="match status" value="1"/>
</dbReference>
<dbReference type="Pfam" id="PF01084">
    <property type="entry name" value="Ribosomal_S18"/>
    <property type="match status" value="1"/>
</dbReference>
<dbReference type="PRINTS" id="PR00974">
    <property type="entry name" value="RIBOSOMALS18"/>
</dbReference>
<dbReference type="SUPFAM" id="SSF46911">
    <property type="entry name" value="Ribosomal protein S18"/>
    <property type="match status" value="1"/>
</dbReference>
<dbReference type="PROSITE" id="PS00057">
    <property type="entry name" value="RIBOSOMAL_S18"/>
    <property type="match status" value="1"/>
</dbReference>
<accession>P66459</accession>
<accession>P56025</accession>
<evidence type="ECO:0000255" key="1">
    <source>
        <dbReference type="HAMAP-Rule" id="MF_00270"/>
    </source>
</evidence>
<evidence type="ECO:0000305" key="2"/>
<keyword id="KW-1185">Reference proteome</keyword>
<keyword id="KW-0687">Ribonucleoprotein</keyword>
<keyword id="KW-0689">Ribosomal protein</keyword>
<keyword id="KW-0694">RNA-binding</keyword>
<keyword id="KW-0699">rRNA-binding</keyword>
<feature type="chain" id="PRO_0000111163" description="Small ribosomal subunit protein bS18">
    <location>
        <begin position="1"/>
        <end position="85"/>
    </location>
</feature>
<organism>
    <name type="scientific">Helicobacter pylori (strain ATCC 700392 / 26695)</name>
    <name type="common">Campylobacter pylori</name>
    <dbReference type="NCBI Taxonomy" id="85962"/>
    <lineage>
        <taxon>Bacteria</taxon>
        <taxon>Pseudomonadati</taxon>
        <taxon>Campylobacterota</taxon>
        <taxon>Epsilonproteobacteria</taxon>
        <taxon>Campylobacterales</taxon>
        <taxon>Helicobacteraceae</taxon>
        <taxon>Helicobacter</taxon>
    </lineage>
</organism>
<sequence length="85" mass="10448">MERKRYSKRYCKYTEAKISFIDYKDLDMLKHTLSERYKIMPRRLTGNSKKWQERVEVAIKRARHMALIPYIVDRKKVVDSPFKQH</sequence>
<proteinExistence type="evidence at protein level"/>
<gene>
    <name evidence="1" type="primary">rpsR</name>
    <name type="ordered locus">HP_1244</name>
</gene>
<reference key="1">
    <citation type="journal article" date="1997" name="Nature">
        <title>The complete genome sequence of the gastric pathogen Helicobacter pylori.</title>
        <authorList>
            <person name="Tomb J.-F."/>
            <person name="White O."/>
            <person name="Kerlavage A.R."/>
            <person name="Clayton R.A."/>
            <person name="Sutton G.G."/>
            <person name="Fleischmann R.D."/>
            <person name="Ketchum K.A."/>
            <person name="Klenk H.-P."/>
            <person name="Gill S.R."/>
            <person name="Dougherty B.A."/>
            <person name="Nelson K.E."/>
            <person name="Quackenbush J."/>
            <person name="Zhou L."/>
            <person name="Kirkness E.F."/>
            <person name="Peterson S.N."/>
            <person name="Loftus B.J."/>
            <person name="Richardson D.L."/>
            <person name="Dodson R.J."/>
            <person name="Khalak H.G."/>
            <person name="Glodek A."/>
            <person name="McKenney K."/>
            <person name="FitzGerald L.M."/>
            <person name="Lee N."/>
            <person name="Adams M.D."/>
            <person name="Hickey E.K."/>
            <person name="Berg D.E."/>
            <person name="Gocayne J.D."/>
            <person name="Utterback T.R."/>
            <person name="Peterson J.D."/>
            <person name="Kelley J.M."/>
            <person name="Cotton M.D."/>
            <person name="Weidman J.F."/>
            <person name="Fujii C."/>
            <person name="Bowman C."/>
            <person name="Watthey L."/>
            <person name="Wallin E."/>
            <person name="Hayes W.S."/>
            <person name="Borodovsky M."/>
            <person name="Karp P.D."/>
            <person name="Smith H.O."/>
            <person name="Fraser C.M."/>
            <person name="Venter J.C."/>
        </authorList>
    </citation>
    <scope>NUCLEOTIDE SEQUENCE [LARGE SCALE GENOMIC DNA]</scope>
    <source>
        <strain>ATCC 700392 / 26695</strain>
    </source>
</reference>
<name>RS18_HELPY</name>